<organism>
    <name type="scientific">Homo sapiens</name>
    <name type="common">Human</name>
    <dbReference type="NCBI Taxonomy" id="9606"/>
    <lineage>
        <taxon>Eukaryota</taxon>
        <taxon>Metazoa</taxon>
        <taxon>Chordata</taxon>
        <taxon>Craniata</taxon>
        <taxon>Vertebrata</taxon>
        <taxon>Euteleostomi</taxon>
        <taxon>Mammalia</taxon>
        <taxon>Eutheria</taxon>
        <taxon>Euarchontoglires</taxon>
        <taxon>Primates</taxon>
        <taxon>Haplorrhini</taxon>
        <taxon>Catarrhini</taxon>
        <taxon>Hominidae</taxon>
        <taxon>Homo</taxon>
    </lineage>
</organism>
<proteinExistence type="evidence at protein level"/>
<dbReference type="EMBL" id="AF036718">
    <property type="protein sequence ID" value="AAB92555.1"/>
    <property type="molecule type" value="mRNA"/>
</dbReference>
<dbReference type="EMBL" id="CR457026">
    <property type="protein sequence ID" value="CAG33307.1"/>
    <property type="molecule type" value="mRNA"/>
</dbReference>
<dbReference type="EMBL" id="AL365205">
    <property type="status" value="NOT_ANNOTATED_CDS"/>
    <property type="molecule type" value="Genomic_DNA"/>
</dbReference>
<dbReference type="EMBL" id="BC010611">
    <property type="protein sequence ID" value="AAH10611.1"/>
    <property type="molecule type" value="mRNA"/>
</dbReference>
<dbReference type="CCDS" id="CCDS4860.1"/>
<dbReference type="RefSeq" id="NP_006644.1">
    <property type="nucleotide sequence ID" value="NM_006653.5"/>
</dbReference>
<dbReference type="RefSeq" id="XP_011512556.1">
    <property type="nucleotide sequence ID" value="XM_011514254.2"/>
</dbReference>
<dbReference type="RefSeq" id="XP_011512557.1">
    <property type="nucleotide sequence ID" value="XM_011514255.2"/>
</dbReference>
<dbReference type="RefSeq" id="XP_047274053.1">
    <property type="nucleotide sequence ID" value="XM_047418097.1"/>
</dbReference>
<dbReference type="RefSeq" id="XP_054210041.1">
    <property type="nucleotide sequence ID" value="XM_054354066.1"/>
</dbReference>
<dbReference type="RefSeq" id="XP_054210042.1">
    <property type="nucleotide sequence ID" value="XM_054354067.1"/>
</dbReference>
<dbReference type="PDB" id="2KUP">
    <property type="method" value="NMR"/>
    <property type="chains" value="A=8-146"/>
</dbReference>
<dbReference type="PDB" id="2KUQ">
    <property type="method" value="NMR"/>
    <property type="chains" value="A=8-120"/>
</dbReference>
<dbReference type="PDB" id="2YS5">
    <property type="method" value="NMR"/>
    <property type="chains" value="A=8-146"/>
</dbReference>
<dbReference type="PDB" id="2YT2">
    <property type="method" value="NMR"/>
    <property type="chains" value="A=8-120"/>
</dbReference>
<dbReference type="PDBsum" id="2KUP"/>
<dbReference type="PDBsum" id="2KUQ"/>
<dbReference type="PDBsum" id="2YS5"/>
<dbReference type="PDBsum" id="2YT2"/>
<dbReference type="BMRB" id="O43559"/>
<dbReference type="SMR" id="O43559"/>
<dbReference type="BioGRID" id="116030">
    <property type="interactions" value="113"/>
</dbReference>
<dbReference type="FunCoup" id="O43559">
    <property type="interactions" value="500"/>
</dbReference>
<dbReference type="IntAct" id="O43559">
    <property type="interactions" value="108"/>
</dbReference>
<dbReference type="MINT" id="O43559"/>
<dbReference type="STRING" id="9606.ENSP00000362109"/>
<dbReference type="GlyGen" id="O43559">
    <property type="glycosylation" value="2 sites, 1 O-linked glycan (1 site)"/>
</dbReference>
<dbReference type="iPTMnet" id="O43559"/>
<dbReference type="PhosphoSitePlus" id="O43559"/>
<dbReference type="SwissPalm" id="O43559"/>
<dbReference type="BioMuta" id="FRS3"/>
<dbReference type="jPOST" id="O43559"/>
<dbReference type="MassIVE" id="O43559"/>
<dbReference type="PaxDb" id="9606-ENSP00000362109"/>
<dbReference type="PeptideAtlas" id="O43559"/>
<dbReference type="ProteomicsDB" id="49051"/>
<dbReference type="Antibodypedia" id="30086">
    <property type="antibodies" value="208 antibodies from 28 providers"/>
</dbReference>
<dbReference type="DNASU" id="10817"/>
<dbReference type="Ensembl" id="ENST00000259748.6">
    <property type="protein sequence ID" value="ENSP00000259748.2"/>
    <property type="gene ID" value="ENSG00000137218.10"/>
</dbReference>
<dbReference type="Ensembl" id="ENST00000373018.7">
    <property type="protein sequence ID" value="ENSP00000362109.3"/>
    <property type="gene ID" value="ENSG00000137218.10"/>
</dbReference>
<dbReference type="GeneID" id="10817"/>
<dbReference type="KEGG" id="hsa:10817"/>
<dbReference type="MANE-Select" id="ENST00000373018.7">
    <property type="protein sequence ID" value="ENSP00000362109.3"/>
    <property type="RefSeq nucleotide sequence ID" value="NM_006653.5"/>
    <property type="RefSeq protein sequence ID" value="NP_006644.1"/>
</dbReference>
<dbReference type="UCSC" id="uc003orc.3">
    <property type="organism name" value="human"/>
</dbReference>
<dbReference type="AGR" id="HGNC:16970"/>
<dbReference type="CTD" id="10817"/>
<dbReference type="DisGeNET" id="10817"/>
<dbReference type="GeneCards" id="FRS3"/>
<dbReference type="HGNC" id="HGNC:16970">
    <property type="gene designation" value="FRS3"/>
</dbReference>
<dbReference type="HPA" id="ENSG00000137218">
    <property type="expression patterns" value="Tissue enhanced (brain)"/>
</dbReference>
<dbReference type="MIM" id="607744">
    <property type="type" value="gene"/>
</dbReference>
<dbReference type="neXtProt" id="NX_O43559"/>
<dbReference type="OpenTargets" id="ENSG00000137218"/>
<dbReference type="PharmGKB" id="PA134961503"/>
<dbReference type="VEuPathDB" id="HostDB:ENSG00000137218"/>
<dbReference type="eggNOG" id="KOG4047">
    <property type="taxonomic scope" value="Eukaryota"/>
</dbReference>
<dbReference type="GeneTree" id="ENSGT00940000159495"/>
<dbReference type="HOGENOM" id="CLU_022374_0_0_1"/>
<dbReference type="InParanoid" id="O43559"/>
<dbReference type="OMA" id="CPTECLA"/>
<dbReference type="OrthoDB" id="8817077at2759"/>
<dbReference type="PAN-GO" id="O43559">
    <property type="GO annotations" value="4 GO annotations based on evolutionary models"/>
</dbReference>
<dbReference type="PhylomeDB" id="O43559"/>
<dbReference type="TreeFam" id="TF324994"/>
<dbReference type="PathwayCommons" id="O43559"/>
<dbReference type="Reactome" id="R-HSA-5654693">
    <property type="pathway name" value="FRS-mediated FGFR1 signaling"/>
</dbReference>
<dbReference type="Reactome" id="R-HSA-5654700">
    <property type="pathway name" value="FRS-mediated FGFR2 signaling"/>
</dbReference>
<dbReference type="Reactome" id="R-HSA-5654706">
    <property type="pathway name" value="FRS-mediated FGFR3 signaling"/>
</dbReference>
<dbReference type="Reactome" id="R-HSA-5654712">
    <property type="pathway name" value="FRS-mediated FGFR4 signaling"/>
</dbReference>
<dbReference type="Reactome" id="R-HSA-5673001">
    <property type="pathway name" value="RAF/MAP kinase cascade"/>
</dbReference>
<dbReference type="Reactome" id="R-HSA-9028731">
    <property type="pathway name" value="Activated NTRK2 signals through FRS2 and FRS3"/>
</dbReference>
<dbReference type="Reactome" id="R-HSA-9696270">
    <property type="pathway name" value="RND2 GTPase cycle"/>
</dbReference>
<dbReference type="Reactome" id="R-HSA-9696273">
    <property type="pathway name" value="RND1 GTPase cycle"/>
</dbReference>
<dbReference type="Reactome" id="R-HSA-9725370">
    <property type="pathway name" value="Signaling by ALK fusions and activated point mutants"/>
</dbReference>
<dbReference type="SignaLink" id="O43559"/>
<dbReference type="SIGNOR" id="O43559"/>
<dbReference type="BioGRID-ORCS" id="10817">
    <property type="hits" value="10 hits in 1154 CRISPR screens"/>
</dbReference>
<dbReference type="ChiTaRS" id="FRS3">
    <property type="organism name" value="human"/>
</dbReference>
<dbReference type="EvolutionaryTrace" id="O43559"/>
<dbReference type="GeneWiki" id="FRS3"/>
<dbReference type="GenomeRNAi" id="10817"/>
<dbReference type="Pharos" id="O43559">
    <property type="development level" value="Tbio"/>
</dbReference>
<dbReference type="PRO" id="PR:O43559"/>
<dbReference type="Proteomes" id="UP000005640">
    <property type="component" value="Chromosome 6"/>
</dbReference>
<dbReference type="RNAct" id="O43559">
    <property type="molecule type" value="protein"/>
</dbReference>
<dbReference type="Bgee" id="ENSG00000137218">
    <property type="expression patterns" value="Expressed in right hemisphere of cerebellum and 123 other cell types or tissues"/>
</dbReference>
<dbReference type="ExpressionAtlas" id="O43559">
    <property type="expression patterns" value="baseline and differential"/>
</dbReference>
<dbReference type="GO" id="GO:0005737">
    <property type="term" value="C:cytoplasm"/>
    <property type="evidence" value="ECO:0000318"/>
    <property type="project" value="GO_Central"/>
</dbReference>
<dbReference type="GO" id="GO:0005886">
    <property type="term" value="C:plasma membrane"/>
    <property type="evidence" value="ECO:0000304"/>
    <property type="project" value="Reactome"/>
</dbReference>
<dbReference type="GO" id="GO:0005104">
    <property type="term" value="F:fibroblast growth factor receptor binding"/>
    <property type="evidence" value="ECO:0000353"/>
    <property type="project" value="MGI"/>
</dbReference>
<dbReference type="GO" id="GO:0042802">
    <property type="term" value="F:identical protein binding"/>
    <property type="evidence" value="ECO:0000353"/>
    <property type="project" value="IntAct"/>
</dbReference>
<dbReference type="GO" id="GO:0005068">
    <property type="term" value="F:transmembrane receptor protein tyrosine kinase adaptor activity"/>
    <property type="evidence" value="ECO:0000318"/>
    <property type="project" value="GO_Central"/>
</dbReference>
<dbReference type="GO" id="GO:0008543">
    <property type="term" value="P:fibroblast growth factor receptor signaling pathway"/>
    <property type="evidence" value="ECO:0000316"/>
    <property type="project" value="MGI"/>
</dbReference>
<dbReference type="GO" id="GO:0007165">
    <property type="term" value="P:signal transduction"/>
    <property type="evidence" value="ECO:0000304"/>
    <property type="project" value="ProtInc"/>
</dbReference>
<dbReference type="CDD" id="cd01202">
    <property type="entry name" value="PTB_FRS2"/>
    <property type="match status" value="1"/>
</dbReference>
<dbReference type="FunFam" id="2.30.29.30:FF:000169">
    <property type="entry name" value="Fibroblast growth factor receptor substrate 2"/>
    <property type="match status" value="1"/>
</dbReference>
<dbReference type="Gene3D" id="2.30.29.30">
    <property type="entry name" value="Pleckstrin-homology domain (PH domain)/Phosphotyrosine-binding domain (PTB)"/>
    <property type="match status" value="1"/>
</dbReference>
<dbReference type="InterPro" id="IPR050996">
    <property type="entry name" value="Docking_Protein_DOK"/>
</dbReference>
<dbReference type="InterPro" id="IPR038742">
    <property type="entry name" value="FRS2_PTB"/>
</dbReference>
<dbReference type="InterPro" id="IPR002404">
    <property type="entry name" value="IRS_PTB"/>
</dbReference>
<dbReference type="InterPro" id="IPR011993">
    <property type="entry name" value="PH-like_dom_sf"/>
</dbReference>
<dbReference type="PANTHER" id="PTHR21258">
    <property type="entry name" value="DOCKING PROTEIN RELATED"/>
    <property type="match status" value="1"/>
</dbReference>
<dbReference type="PANTHER" id="PTHR21258:SF39">
    <property type="entry name" value="FIBROBLAST GROWTH FACTOR RECEPTOR SUBSTRATE 3"/>
    <property type="match status" value="1"/>
</dbReference>
<dbReference type="Pfam" id="PF02174">
    <property type="entry name" value="IRS"/>
    <property type="match status" value="1"/>
</dbReference>
<dbReference type="SMART" id="SM01244">
    <property type="entry name" value="IRS"/>
    <property type="match status" value="1"/>
</dbReference>
<dbReference type="SMART" id="SM00310">
    <property type="entry name" value="PTBI"/>
    <property type="match status" value="1"/>
</dbReference>
<dbReference type="SUPFAM" id="SSF50729">
    <property type="entry name" value="PH domain-like"/>
    <property type="match status" value="1"/>
</dbReference>
<dbReference type="PROSITE" id="PS51064">
    <property type="entry name" value="IRS_PTB"/>
    <property type="match status" value="1"/>
</dbReference>
<comment type="function">
    <text evidence="5">Adapter protein that links FGF and NGF receptors to downstream signaling pathways. Involved in the activation of MAP kinases. Down-regulates ERK2 signaling by interfering with the phosphorylation and nuclear translocation of ERK2.</text>
</comment>
<comment type="subunit">
    <text evidence="1">Binds NTRK1 (By similarity). Binds FGFR1, NGFR, GRB2, PTPN11 and ERK2.</text>
</comment>
<comment type="interaction">
    <interactant intactId="EBI-725515">
        <id>O43559</id>
    </interactant>
    <interactant intactId="EBI-11976299">
        <id>Q5BKX5-3</id>
        <label>ACTMAP</label>
    </interactant>
    <organismsDiffer>false</organismsDiffer>
    <experiments>3</experiments>
</comment>
<comment type="interaction">
    <interactant intactId="EBI-725515">
        <id>O43559</id>
    </interactant>
    <interactant intactId="EBI-10173507">
        <id>Q6UY14-3</id>
        <label>ADAMTSL4</label>
    </interactant>
    <organismsDiffer>false</organismsDiffer>
    <experiments>3</experiments>
</comment>
<comment type="interaction">
    <interactant intactId="EBI-725515">
        <id>O43559</id>
    </interactant>
    <interactant intactId="EBI-357530">
        <id>Q9ULX6</id>
        <label>AKAP8L</label>
    </interactant>
    <organismsDiffer>false</organismsDiffer>
    <experiments>3</experiments>
</comment>
<comment type="interaction">
    <interactant intactId="EBI-725515">
        <id>O43559</id>
    </interactant>
    <interactant intactId="EBI-12224467">
        <id>Q9NYG5-2</id>
        <label>ANAPC11</label>
    </interactant>
    <organismsDiffer>false</organismsDiffer>
    <experiments>3</experiments>
</comment>
<comment type="interaction">
    <interactant intactId="EBI-725515">
        <id>O43559</id>
    </interactant>
    <interactant intactId="EBI-14493093">
        <id>Q3KP44</id>
        <label>ANKRD55</label>
    </interactant>
    <organismsDiffer>false</organismsDiffer>
    <experiments>3</experiments>
</comment>
<comment type="interaction">
    <interactant intactId="EBI-725515">
        <id>O43559</id>
    </interactant>
    <interactant intactId="EBI-12811889">
        <id>Q9Y6H3</id>
        <label>ATP23</label>
    </interactant>
    <organismsDiffer>false</organismsDiffer>
    <experiments>3</experiments>
</comment>
<comment type="interaction">
    <interactant intactId="EBI-725515">
        <id>O43559</id>
    </interactant>
    <interactant intactId="EBI-2548012">
        <id>Q9H2G9</id>
        <label>BLZF1</label>
    </interactant>
    <organismsDiffer>false</organismsDiffer>
    <experiments>3</experiments>
</comment>
<comment type="interaction">
    <interactant intactId="EBI-725515">
        <id>O43559</id>
    </interactant>
    <interactant intactId="EBI-7317823">
        <id>Q6P5X5</id>
        <label>C22orf39</label>
    </interactant>
    <organismsDiffer>false</organismsDiffer>
    <experiments>3</experiments>
</comment>
<comment type="interaction">
    <interactant intactId="EBI-725515">
        <id>O43559</id>
    </interactant>
    <interactant intactId="EBI-744545">
        <id>Q8NEC5</id>
        <label>CATSPER1</label>
    </interactant>
    <organismsDiffer>false</organismsDiffer>
    <experiments>3</experiments>
</comment>
<comment type="interaction">
    <interactant intactId="EBI-725515">
        <id>O43559</id>
    </interactant>
    <interactant intactId="EBI-741724">
        <id>Q8NA61</id>
        <label>CBY2</label>
    </interactant>
    <organismsDiffer>false</organismsDiffer>
    <experiments>3</experiments>
</comment>
<comment type="interaction">
    <interactant intactId="EBI-725515">
        <id>O43559</id>
    </interactant>
    <interactant intactId="EBI-3904822">
        <id>P48745</id>
        <label>CCN3</label>
    </interactant>
    <organismsDiffer>false</organismsDiffer>
    <experiments>3</experiments>
</comment>
<comment type="interaction">
    <interactant intactId="EBI-725515">
        <id>O43559</id>
    </interactant>
    <interactant intactId="EBI-2802782">
        <id>Q6NVV7</id>
        <label>CDPF1</label>
    </interactant>
    <organismsDiffer>false</organismsDiffer>
    <experiments>3</experiments>
</comment>
<comment type="interaction">
    <interactant intactId="EBI-725515">
        <id>O43559</id>
    </interactant>
    <interactant intactId="EBI-718615">
        <id>Q9H5F2</id>
        <label>CFAP68</label>
    </interactant>
    <organismsDiffer>false</organismsDiffer>
    <experiments>3</experiments>
</comment>
<comment type="interaction">
    <interactant intactId="EBI-725515">
        <id>O43559</id>
    </interactant>
    <interactant intactId="EBI-747133">
        <id>P27658</id>
        <label>COL8A1</label>
    </interactant>
    <organismsDiffer>false</organismsDiffer>
    <experiments>3</experiments>
</comment>
<comment type="interaction">
    <interactant intactId="EBI-725515">
        <id>O43559</id>
    </interactant>
    <interactant intactId="EBI-350590">
        <id>Q9UNS2</id>
        <label>COPS3</label>
    </interactant>
    <organismsDiffer>false</organismsDiffer>
    <experiments>3</experiments>
</comment>
<comment type="interaction">
    <interactant intactId="EBI-725515">
        <id>O43559</id>
    </interactant>
    <interactant intactId="EBI-10192698">
        <id>Q02930-3</id>
        <label>CREB5</label>
    </interactant>
    <organismsDiffer>false</organismsDiffer>
    <experiments>3</experiments>
</comment>
<comment type="interaction">
    <interactant intactId="EBI-725515">
        <id>O43559</id>
    </interactant>
    <interactant intactId="EBI-3867333">
        <id>A8MQ03</id>
        <label>CYSRT1</label>
    </interactant>
    <organismsDiffer>false</organismsDiffer>
    <experiments>3</experiments>
</comment>
<comment type="interaction">
    <interactant intactId="EBI-725515">
        <id>O43559</id>
    </interactant>
    <interactant intactId="EBI-10173222">
        <id>A2VCK2</id>
        <label>DCDC2B</label>
    </interactant>
    <organismsDiffer>false</organismsDiffer>
    <experiments>3</experiments>
</comment>
<comment type="interaction">
    <interactant intactId="EBI-725515">
        <id>O43559</id>
    </interactant>
    <interactant intactId="EBI-9679045">
        <id>Q9NQL9</id>
        <label>DMRT3</label>
    </interactant>
    <organismsDiffer>false</organismsDiffer>
    <experiments>3</experiments>
</comment>
<comment type="interaction">
    <interactant intactId="EBI-725515">
        <id>O43559</id>
    </interactant>
    <interactant intactId="EBI-18398199">
        <id>A0A0U1RQF7</id>
        <label>DPEP2NB</label>
    </interactant>
    <organismsDiffer>false</organismsDiffer>
    <experiments>3</experiments>
</comment>
<comment type="interaction">
    <interactant intactId="EBI-725515">
        <id>O43559</id>
    </interactant>
    <interactant intactId="EBI-947964">
        <id>Q16610</id>
        <label>ECM1</label>
    </interactant>
    <organismsDiffer>false</organismsDiffer>
    <experiments>3</experiments>
</comment>
<comment type="interaction">
    <interactant intactId="EBI-725515">
        <id>O43559</id>
    </interactant>
    <interactant intactId="EBI-12260294">
        <id>Q9NQ30</id>
        <label>ESM1</label>
    </interactant>
    <organismsDiffer>false</organismsDiffer>
    <experiments>3</experiments>
</comment>
<comment type="interaction">
    <interactant intactId="EBI-725515">
        <id>O43559</id>
    </interactant>
    <interactant intactId="EBI-725515">
        <id>O43559</id>
        <label>FRS3</label>
    </interactant>
    <organismsDiffer>false</organismsDiffer>
    <experiments>5</experiments>
</comment>
<comment type="interaction">
    <interactant intactId="EBI-725515">
        <id>O43559</id>
    </interactant>
    <interactant intactId="EBI-3909284">
        <id>P15976</id>
        <label>GATA1</label>
    </interactant>
    <organismsDiffer>false</organismsDiffer>
    <experiments>3</experiments>
</comment>
<comment type="interaction">
    <interactant intactId="EBI-725515">
        <id>O43559</id>
    </interactant>
    <interactant intactId="EBI-9090198">
        <id>P15976-2</id>
        <label>GATA1</label>
    </interactant>
    <organismsDiffer>false</organismsDiffer>
    <experiments>5</experiments>
</comment>
<comment type="interaction">
    <interactant intactId="EBI-725515">
        <id>O43559</id>
    </interactant>
    <interactant intactId="EBI-9834454">
        <id>P08631-2</id>
        <label>HCK</label>
    </interactant>
    <organismsDiffer>false</organismsDiffer>
    <experiments>2</experiments>
</comment>
<comment type="interaction">
    <interactant intactId="EBI-725515">
        <id>O43559</id>
    </interactant>
    <interactant intactId="EBI-740785">
        <id>P49639</id>
        <label>HOXA1</label>
    </interactant>
    <organismsDiffer>false</organismsDiffer>
    <experiments>7</experiments>
</comment>
<comment type="interaction">
    <interactant intactId="EBI-725515">
        <id>O43559</id>
    </interactant>
    <interactant intactId="EBI-17244356">
        <id>P35452-2</id>
        <label>HOXD12</label>
    </interactant>
    <organismsDiffer>false</organismsDiffer>
    <experiments>3</experiments>
</comment>
<comment type="interaction">
    <interactant intactId="EBI-725515">
        <id>O43559</id>
    </interactant>
    <interactant intactId="EBI-713450">
        <id>Q02363</id>
        <label>ID2</label>
    </interactant>
    <organismsDiffer>false</organismsDiffer>
    <experiments>3</experiments>
</comment>
<comment type="interaction">
    <interactant intactId="EBI-725515">
        <id>O43559</id>
    </interactant>
    <interactant intactId="EBI-1387094">
        <id>Q02535</id>
        <label>ID3</label>
    </interactant>
    <organismsDiffer>false</organismsDiffer>
    <experiments>3</experiments>
</comment>
<comment type="interaction">
    <interactant intactId="EBI-725515">
        <id>O43559</id>
    </interactant>
    <interactant intactId="EBI-747204">
        <id>Q9UKT9</id>
        <label>IKZF3</label>
    </interactant>
    <organismsDiffer>false</organismsDiffer>
    <experiments>3</experiments>
</comment>
<comment type="interaction">
    <interactant intactId="EBI-725515">
        <id>O43559</id>
    </interactant>
    <interactant intactId="EBI-6509505">
        <id>Q0VD86</id>
        <label>INCA1</label>
    </interactant>
    <organismsDiffer>false</organismsDiffer>
    <experiments>3</experiments>
</comment>
<comment type="interaction">
    <interactant intactId="EBI-725515">
        <id>O43559</id>
    </interactant>
    <interactant intactId="EBI-18398632">
        <id>Q9ULR0-1</id>
        <label>ISY1</label>
    </interactant>
    <organismsDiffer>false</organismsDiffer>
    <experiments>3</experiments>
</comment>
<comment type="interaction">
    <interactant intactId="EBI-725515">
        <id>O43559</id>
    </interactant>
    <interactant intactId="EBI-715394">
        <id>Q9H079</id>
        <label>KATNBL1</label>
    </interactant>
    <organismsDiffer>false</organismsDiffer>
    <experiments>3</experiments>
</comment>
<comment type="interaction">
    <interactant intactId="EBI-725515">
        <id>O43559</id>
    </interactant>
    <interactant intactId="EBI-12810853">
        <id>Q8TAV5</id>
        <label>KCNJ5-AS1</label>
    </interactant>
    <organismsDiffer>false</organismsDiffer>
    <experiments>3</experiments>
</comment>
<comment type="interaction">
    <interactant intactId="EBI-725515">
        <id>O43559</id>
    </interactant>
    <interactant intactId="EBI-739493">
        <id>Q6ZU52</id>
        <label>KIAA0408</label>
    </interactant>
    <organismsDiffer>false</organismsDiffer>
    <experiments>3</experiments>
</comment>
<comment type="interaction">
    <interactant intactId="EBI-725515">
        <id>O43559</id>
    </interactant>
    <interactant intactId="EBI-10981970">
        <id>Q5T749</id>
        <label>KPRP</label>
    </interactant>
    <organismsDiffer>false</organismsDiffer>
    <experiments>5</experiments>
</comment>
<comment type="interaction">
    <interactant intactId="EBI-725515">
        <id>O43559</id>
    </interactant>
    <interactant intactId="EBI-948001">
        <id>Q15323</id>
        <label>KRT31</label>
    </interactant>
    <organismsDiffer>false</organismsDiffer>
    <experiments>3</experiments>
</comment>
<comment type="interaction">
    <interactant intactId="EBI-725515">
        <id>O43559</id>
    </interactant>
    <interactant intactId="EBI-1049638">
        <id>Q14525</id>
        <label>KRT33B</label>
    </interactant>
    <organismsDiffer>false</organismsDiffer>
    <experiments>3</experiments>
</comment>
<comment type="interaction">
    <interactant intactId="EBI-725515">
        <id>O43559</id>
    </interactant>
    <interactant intactId="EBI-1047093">
        <id>O76011</id>
        <label>KRT34</label>
    </interactant>
    <organismsDiffer>false</organismsDiffer>
    <experiments>5</experiments>
</comment>
<comment type="interaction">
    <interactant intactId="EBI-725515">
        <id>O43559</id>
    </interactant>
    <interactant intactId="EBI-1058674">
        <id>Q92764</id>
        <label>KRT35</label>
    </interactant>
    <organismsDiffer>false</organismsDiffer>
    <experiments>3</experiments>
</comment>
<comment type="interaction">
    <interactant intactId="EBI-725515">
        <id>O43559</id>
    </interactant>
    <interactant intactId="EBI-2952745">
        <id>Q01546</id>
        <label>KRT76</label>
    </interactant>
    <organismsDiffer>false</organismsDiffer>
    <experiments>3</experiments>
</comment>
<comment type="interaction">
    <interactant intactId="EBI-725515">
        <id>O43559</id>
    </interactant>
    <interactant intactId="EBI-11959885">
        <id>Q07627</id>
        <label>KRTAP1-1</label>
    </interactant>
    <organismsDiffer>false</organismsDiffer>
    <experiments>3</experiments>
</comment>
<comment type="interaction">
    <interactant intactId="EBI-725515">
        <id>O43559</id>
    </interactant>
    <interactant intactId="EBI-10171774">
        <id>P60410</id>
        <label>KRTAP10-8</label>
    </interactant>
    <organismsDiffer>false</organismsDiffer>
    <experiments>3</experiments>
</comment>
<comment type="interaction">
    <interactant intactId="EBI-725515">
        <id>O43559</id>
    </interactant>
    <interactant intactId="EBI-1052037">
        <id>Q8IUC1</id>
        <label>KRTAP11-1</label>
    </interactant>
    <organismsDiffer>false</organismsDiffer>
    <experiments>3</experiments>
</comment>
<comment type="interaction">
    <interactant intactId="EBI-725515">
        <id>O43559</id>
    </interactant>
    <interactant intactId="EBI-9996449">
        <id>Q9BYR8</id>
        <label>KRTAP3-1</label>
    </interactant>
    <organismsDiffer>false</organismsDiffer>
    <experiments>3</experiments>
</comment>
<comment type="interaction">
    <interactant intactId="EBI-725515">
        <id>O43559</id>
    </interactant>
    <interactant intactId="EBI-751260">
        <id>Q9BYR7</id>
        <label>KRTAP3-2</label>
    </interactant>
    <organismsDiffer>false</organismsDiffer>
    <experiments>3</experiments>
</comment>
<comment type="interaction">
    <interactant intactId="EBI-725515">
        <id>O43559</id>
    </interactant>
    <interactant intactId="EBI-11962084">
        <id>Q3LI66</id>
        <label>KRTAP6-2</label>
    </interactant>
    <organismsDiffer>false</organismsDiffer>
    <experiments>5</experiments>
</comment>
<comment type="interaction">
    <interactant intactId="EBI-725515">
        <id>O43559</id>
    </interactant>
    <interactant intactId="EBI-719955">
        <id>Q96FE5</id>
        <label>LINGO1</label>
    </interactant>
    <organismsDiffer>false</organismsDiffer>
    <experiments>3</experiments>
</comment>
<comment type="interaction">
    <interactant intactId="EBI-725515">
        <id>O43559</id>
    </interactant>
    <interactant intactId="EBI-751373">
        <id>Q8N456</id>
        <label>LRRC18</label>
    </interactant>
    <organismsDiffer>false</organismsDiffer>
    <experiments>3</experiments>
</comment>
<comment type="interaction">
    <interactant intactId="EBI-725515">
        <id>O43559</id>
    </interactant>
    <interactant intactId="EBI-12516603">
        <id>Q8WWY6</id>
        <label>MBD3L1</label>
    </interactant>
    <organismsDiffer>false</organismsDiffer>
    <experiments>3</experiments>
</comment>
<comment type="interaction">
    <interactant intactId="EBI-725515">
        <id>O43559</id>
    </interactant>
    <interactant intactId="EBI-2801965">
        <id>Q5JXC2</id>
        <label>MIIP</label>
    </interactant>
    <organismsDiffer>false</organismsDiffer>
    <experiments>3</experiments>
</comment>
<comment type="interaction">
    <interactant intactId="EBI-725515">
        <id>O43559</id>
    </interactant>
    <interactant intactId="EBI-748610">
        <id>Q6IA69</id>
        <label>NADSYN1</label>
    </interactant>
    <organismsDiffer>false</organismsDiffer>
    <experiments>3</experiments>
</comment>
<comment type="interaction">
    <interactant intactId="EBI-725515">
        <id>O43559</id>
    </interactant>
    <interactant intactId="EBI-945833">
        <id>Q7Z3S9</id>
        <label>NOTCH2NLA</label>
    </interactant>
    <organismsDiffer>false</organismsDiffer>
    <experiments>3</experiments>
</comment>
<comment type="interaction">
    <interactant intactId="EBI-725515">
        <id>O43559</id>
    </interactant>
    <interactant intactId="EBI-22310682">
        <id>P0DPK4</id>
        <label>NOTCH2NLC</label>
    </interactant>
    <organismsDiffer>false</organismsDiffer>
    <experiments>3</experiments>
</comment>
<comment type="interaction">
    <interactant intactId="EBI-725515">
        <id>O43559</id>
    </interactant>
    <interactant intactId="EBI-11956269">
        <id>Q92824-2</id>
        <label>PCSK5</label>
    </interactant>
    <organismsDiffer>false</organismsDiffer>
    <experiments>3</experiments>
</comment>
<comment type="interaction">
    <interactant intactId="EBI-725515">
        <id>O43559</id>
    </interactant>
    <interactant intactId="EBI-350517">
        <id>Q9NR12</id>
        <label>PDLIM7</label>
    </interactant>
    <organismsDiffer>false</organismsDiffer>
    <experiments>3</experiments>
</comment>
<comment type="interaction">
    <interactant intactId="EBI-725515">
        <id>O43559</id>
    </interactant>
    <interactant intactId="EBI-10232538">
        <id>Q8WWB5</id>
        <label>PIH1D2</label>
    </interactant>
    <organismsDiffer>false</organismsDiffer>
    <experiments>3</experiments>
</comment>
<comment type="interaction">
    <interactant intactId="EBI-725515">
        <id>O43559</id>
    </interactant>
    <interactant intactId="EBI-79893">
        <id>Q92569</id>
        <label>PIK3R3</label>
    </interactant>
    <organismsDiffer>false</organismsDiffer>
    <experiments>3</experiments>
</comment>
<comment type="interaction">
    <interactant intactId="EBI-725515">
        <id>O43559</id>
    </interactant>
    <interactant intactId="EBI-10694821">
        <id>Q6P1J6-2</id>
        <label>PLB1</label>
    </interactant>
    <organismsDiffer>false</organismsDiffer>
    <experiments>3</experiments>
</comment>
<comment type="interaction">
    <interactant intactId="EBI-725515">
        <id>O43559</id>
    </interactant>
    <interactant intactId="EBI-3919291">
        <id>Q9Y342</id>
        <label>PLLP</label>
    </interactant>
    <organismsDiffer>false</organismsDiffer>
    <experiments>3</experiments>
</comment>
<comment type="interaction">
    <interactant intactId="EBI-725515">
        <id>O43559</id>
    </interactant>
    <interactant intactId="EBI-740019">
        <id>O15162</id>
        <label>PLSCR1</label>
    </interactant>
    <organismsDiffer>false</organismsDiffer>
    <experiments>3</experiments>
</comment>
<comment type="interaction">
    <interactant intactId="EBI-725515">
        <id>O43559</id>
    </interactant>
    <interactant intactId="EBI-11986735">
        <id>Q8WVV4-1</id>
        <label>POF1B</label>
    </interactant>
    <organismsDiffer>false</organismsDiffer>
    <experiments>3</experiments>
</comment>
<comment type="interaction">
    <interactant intactId="EBI-725515">
        <id>O43559</id>
    </interactant>
    <interactant intactId="EBI-11320284">
        <id>Q9NQX0</id>
        <label>PRDM6</label>
    </interactant>
    <organismsDiffer>false</organismsDiffer>
    <experiments>3</experiments>
</comment>
<comment type="interaction">
    <interactant intactId="EBI-725515">
        <id>O43559</id>
    </interactant>
    <interactant intactId="EBI-746118">
        <id>Q8HWS3</id>
        <label>RFX6</label>
    </interactant>
    <organismsDiffer>false</organismsDiffer>
    <experiments>6</experiments>
</comment>
<comment type="interaction">
    <interactant intactId="EBI-725515">
        <id>O43559</id>
    </interactant>
    <interactant intactId="EBI-10182375">
        <id>Q9UFD9</id>
        <label>RIMBP3</label>
    </interactant>
    <organismsDiffer>false</organismsDiffer>
    <experiments>3</experiments>
</comment>
<comment type="interaction">
    <interactant intactId="EBI-725515">
        <id>O43559</id>
    </interactant>
    <interactant intactId="EBI-12000762">
        <id>Q7Z5V6-2</id>
        <label>SAXO4</label>
    </interactant>
    <organismsDiffer>false</organismsDiffer>
    <experiments>3</experiments>
</comment>
<comment type="interaction">
    <interactant intactId="EBI-725515">
        <id>O43559</id>
    </interactant>
    <interactant intactId="EBI-748391">
        <id>Q9BWG6</id>
        <label>SCNM1</label>
    </interactant>
    <organismsDiffer>false</organismsDiffer>
    <experiments>3</experiments>
</comment>
<comment type="interaction">
    <interactant intactId="EBI-725515">
        <id>O43559</id>
    </interactant>
    <interactant intactId="EBI-10269374">
        <id>Q8ND83</id>
        <label>SLAIN1</label>
    </interactant>
    <organismsDiffer>false</organismsDiffer>
    <experiments>3</experiments>
</comment>
<comment type="interaction">
    <interactant intactId="EBI-725515">
        <id>O43559</id>
    </interactant>
    <interactant intactId="EBI-12829638">
        <id>Q8N1D0-2</id>
        <label>SLC22A18AS</label>
    </interactant>
    <organismsDiffer>false</organismsDiffer>
    <experiments>3</experiments>
</comment>
<comment type="interaction">
    <interactant intactId="EBI-725515">
        <id>O43559</id>
    </interactant>
    <interactant intactId="EBI-3942425">
        <id>Q8WXH5</id>
        <label>SOCS4</label>
    </interactant>
    <organismsDiffer>false</organismsDiffer>
    <experiments>2</experiments>
</comment>
<comment type="interaction">
    <interactant intactId="EBI-725515">
        <id>O43559</id>
    </interactant>
    <interactant intactId="EBI-11959123">
        <id>Q99932-2</id>
        <label>SPAG8</label>
    </interactant>
    <organismsDiffer>false</organismsDiffer>
    <experiments>3</experiments>
</comment>
<comment type="interaction">
    <interactant intactId="EBI-725515">
        <id>O43559</id>
    </interactant>
    <interactant intactId="EBI-10696971">
        <id>Q7Z6I5</id>
        <label>SPATA12</label>
    </interactant>
    <organismsDiffer>false</organismsDiffer>
    <experiments>3</experiments>
</comment>
<comment type="interaction">
    <interactant intactId="EBI-725515">
        <id>O43559</id>
    </interactant>
    <interactant intactId="EBI-742487">
        <id>O43597</id>
        <label>SPRY2</label>
    </interactant>
    <organismsDiffer>false</organismsDiffer>
    <experiments>3</experiments>
</comment>
<comment type="interaction">
    <interactant intactId="EBI-725515">
        <id>O43559</id>
    </interactant>
    <interactant intactId="EBI-12843506">
        <id>Q8IWL8</id>
        <label>STH</label>
    </interactant>
    <organismsDiffer>false</organismsDiffer>
    <experiments>3</experiments>
</comment>
<comment type="interaction">
    <interactant intactId="EBI-725515">
        <id>O43559</id>
    </interactant>
    <interactant intactId="EBI-749295">
        <id>O75716</id>
        <label>STK16</label>
    </interactant>
    <organismsDiffer>false</organismsDiffer>
    <experiments>3</experiments>
</comment>
<comment type="interaction">
    <interactant intactId="EBI-725515">
        <id>O43559</id>
    </interactant>
    <interactant intactId="EBI-533224">
        <id>P15884</id>
        <label>TCF4</label>
    </interactant>
    <organismsDiffer>false</organismsDiffer>
    <experiments>3</experiments>
</comment>
<comment type="interaction">
    <interactant intactId="EBI-725515">
        <id>O43559</id>
    </interactant>
    <interactant intactId="EBI-3923210">
        <id>Q8TDR4</id>
        <label>TCP10L</label>
    </interactant>
    <organismsDiffer>false</organismsDiffer>
    <experiments>3</experiments>
</comment>
<comment type="interaction">
    <interactant intactId="EBI-725515">
        <id>O43559</id>
    </interactant>
    <interactant intactId="EBI-12029034">
        <id>Q96PF1</id>
        <label>TGM7</label>
    </interactant>
    <organismsDiffer>false</organismsDiffer>
    <experiments>3</experiments>
</comment>
<comment type="interaction">
    <interactant intactId="EBI-725515">
        <id>O43559</id>
    </interactant>
    <interactant intactId="EBI-717810">
        <id>Q08117</id>
        <label>TLE5</label>
    </interactant>
    <organismsDiffer>false</organismsDiffer>
    <experiments>3</experiments>
</comment>
<comment type="interaction">
    <interactant intactId="EBI-725515">
        <id>O43559</id>
    </interactant>
    <interactant intactId="EBI-11741437">
        <id>Q08117-2</id>
        <label>TLE5</label>
    </interactant>
    <organismsDiffer>false</organismsDiffer>
    <experiments>5</experiments>
</comment>
<comment type="interaction">
    <interactant intactId="EBI-725515">
        <id>O43559</id>
    </interactant>
    <interactant intactId="EBI-3650647">
        <id>Q9BUZ4</id>
        <label>TRAF4</label>
    </interactant>
    <organismsDiffer>false</organismsDiffer>
    <experiments>3</experiments>
</comment>
<comment type="interaction">
    <interactant intactId="EBI-725515">
        <id>O43559</id>
    </interactant>
    <interactant intactId="EBI-742327">
        <id>Q15654</id>
        <label>TRIP6</label>
    </interactant>
    <organismsDiffer>false</organismsDiffer>
    <experiments>6</experiments>
</comment>
<comment type="interaction">
    <interactant intactId="EBI-725515">
        <id>O43559</id>
    </interactant>
    <interactant intactId="EBI-12806590">
        <id>Q86WV8</id>
        <label>TSC1</label>
    </interactant>
    <organismsDiffer>false</organismsDiffer>
    <experiments>3</experiments>
</comment>
<comment type="interaction">
    <interactant intactId="EBI-725515">
        <id>O43559</id>
    </interactant>
    <interactant intactId="EBI-10241197">
        <id>Q3SY00</id>
        <label>TSGA10IP</label>
    </interactant>
    <organismsDiffer>false</organismsDiffer>
    <experiments>3</experiments>
</comment>
<comment type="interaction">
    <interactant intactId="EBI-725515">
        <id>O43559</id>
    </interactant>
    <interactant intactId="EBI-8652667">
        <id>O14817</id>
        <label>TSPAN4</label>
    </interactant>
    <organismsDiffer>false</organismsDiffer>
    <experiments>3</experiments>
</comment>
<comment type="interaction">
    <interactant intactId="EBI-725515">
        <id>O43559</id>
    </interactant>
    <interactant intactId="EBI-12817837">
        <id>Q9H9P5-5</id>
        <label>UNKL</label>
    </interactant>
    <organismsDiffer>false</organismsDiffer>
    <experiments>3</experiments>
</comment>
<comment type="interaction">
    <interactant intactId="EBI-725515">
        <id>O43559</id>
    </interactant>
    <interactant intactId="EBI-11957216">
        <id>A8MV65-2</id>
        <label>VGLL3</label>
    </interactant>
    <organismsDiffer>false</organismsDiffer>
    <experiments>3</experiments>
</comment>
<comment type="interaction">
    <interactant intactId="EBI-725515">
        <id>O43559</id>
    </interactant>
    <interactant intactId="EBI-7705033">
        <id>Q9BRX9</id>
        <label>WDR83</label>
    </interactant>
    <organismsDiffer>false</organismsDiffer>
    <experiments>3</experiments>
</comment>
<comment type="interaction">
    <interactant intactId="EBI-725515">
        <id>O43559</id>
    </interactant>
    <interactant intactId="EBI-12040603">
        <id>Q9NZC7-5</id>
        <label>WWOX</label>
    </interactant>
    <organismsDiffer>false</organismsDiffer>
    <experiments>3</experiments>
</comment>
<comment type="interaction">
    <interactant intactId="EBI-725515">
        <id>O43559</id>
    </interactant>
    <interactant intactId="EBI-11419867">
        <id>Q8TF47</id>
        <label>ZFP90</label>
    </interactant>
    <organismsDiffer>false</organismsDiffer>
    <experiments>3</experiments>
</comment>
<comment type="interaction">
    <interactant intactId="EBI-725515">
        <id>O43559</id>
    </interactant>
    <interactant intactId="EBI-12011330">
        <id>Q8NF64-3</id>
        <label>ZMIZ2</label>
    </interactant>
    <organismsDiffer>false</organismsDiffer>
    <experiments>3</experiments>
</comment>
<comment type="interaction">
    <interactant intactId="EBI-725515">
        <id>O43559</id>
    </interactant>
    <interactant intactId="EBI-2555767">
        <id>Q15973</id>
        <label>ZNF124</label>
    </interactant>
    <organismsDiffer>false</organismsDiffer>
    <experiments>3</experiments>
</comment>
<comment type="interaction">
    <interactant intactId="EBI-725515">
        <id>O43559</id>
    </interactant>
    <interactant intactId="EBI-740727">
        <id>Q8TAU3</id>
        <label>ZNF417</label>
    </interactant>
    <organismsDiffer>false</organismsDiffer>
    <experiments>3</experiments>
</comment>
<comment type="interaction">
    <interactant intactId="EBI-725515">
        <id>O43559</id>
    </interactant>
    <interactant intactId="EBI-11962468">
        <id>Q7Z4V0</id>
        <label>ZNF438</label>
    </interactant>
    <organismsDiffer>false</organismsDiffer>
    <experiments>3</experiments>
</comment>
<comment type="interaction">
    <interactant intactId="EBI-725515">
        <id>O43559</id>
    </interactant>
    <interactant intactId="EBI-740232">
        <id>Q9NWS9-2</id>
        <label>ZNF446</label>
    </interactant>
    <organismsDiffer>false</organismsDiffer>
    <experiments>3</experiments>
</comment>
<comment type="interaction">
    <interactant intactId="EBI-725515">
        <id>O43559</id>
    </interactant>
    <interactant intactId="EBI-2555731">
        <id>Q9H707</id>
        <label>ZNF552</label>
    </interactant>
    <organismsDiffer>false</organismsDiffer>
    <experiments>3</experiments>
</comment>
<comment type="interaction">
    <interactant intactId="EBI-725515">
        <id>O43559</id>
    </interactant>
    <interactant intactId="EBI-12310821">
        <id>Q9UC07-2</id>
        <label>ZNF69</label>
    </interactant>
    <organismsDiffer>false</organismsDiffer>
    <experiments>3</experiments>
</comment>
<comment type="interaction">
    <interactant intactId="EBI-725515">
        <id>O43559</id>
    </interactant>
    <interactant intactId="EBI-11793064">
        <id>Q86W11</id>
        <label>ZSCAN30</label>
    </interactant>
    <organismsDiffer>false</organismsDiffer>
    <experiments>3</experiments>
</comment>
<comment type="interaction">
    <interactant intactId="EBI-725515">
        <id>O43559</id>
    </interactant>
    <interactant intactId="EBI-6863741">
        <id>PRO_0000037548</id>
        <dbReference type="UniProtKB" id="Q9WMX2"/>
    </interactant>
    <organismsDiffer>true</organismsDiffer>
    <experiments>3</experiments>
</comment>
<comment type="subcellular location">
    <subcellularLocation>
        <location>Membrane</location>
        <topology>Lipid-anchor</topology>
    </subcellularLocation>
</comment>
<comment type="PTM">
    <text evidence="1 5 6">Phosphorylated by ULK2 in vitro (By similarity). Phosphorylated on tyrosine residues upon stimulation by BFGF or NGFB.</text>
</comment>
<accession>O43559</accession>
<accession>Q5T3D5</accession>
<name>FRS3_HUMAN</name>
<keyword id="KW-0002">3D-structure</keyword>
<keyword id="KW-0449">Lipoprotein</keyword>
<keyword id="KW-0472">Membrane</keyword>
<keyword id="KW-0519">Myristate</keyword>
<keyword id="KW-0597">Phosphoprotein</keyword>
<keyword id="KW-1267">Proteomics identification</keyword>
<keyword id="KW-1185">Reference proteome</keyword>
<feature type="initiator methionine" description="Removed" evidence="2">
    <location>
        <position position="1"/>
    </location>
</feature>
<feature type="chain" id="PRO_0000087346" description="Fibroblast growth factor receptor substrate 3">
    <location>
        <begin position="2"/>
        <end position="492"/>
    </location>
</feature>
<feature type="domain" description="IRS-type PTB" evidence="3">
    <location>
        <begin position="13"/>
        <end position="115"/>
    </location>
</feature>
<feature type="region of interest" description="Disordered" evidence="4">
    <location>
        <begin position="153"/>
        <end position="173"/>
    </location>
</feature>
<feature type="region of interest" description="Disordered" evidence="4">
    <location>
        <begin position="338"/>
        <end position="455"/>
    </location>
</feature>
<feature type="region of interest" description="Disordered" evidence="4">
    <location>
        <begin position="467"/>
        <end position="492"/>
    </location>
</feature>
<feature type="lipid moiety-binding region" description="N-myristoyl glycine" evidence="7">
    <location>
        <position position="2"/>
    </location>
</feature>
<feature type="sequence variant" id="VAR_033855" description="In dbSNP:rs3747747.">
    <original>P</original>
    <variation>L</variation>
    <location>
        <position position="221"/>
    </location>
</feature>
<feature type="strand" evidence="9">
    <location>
        <begin position="11"/>
        <end position="13"/>
    </location>
</feature>
<feature type="strand" evidence="8">
    <location>
        <begin position="18"/>
        <end position="26"/>
    </location>
</feature>
<feature type="strand" evidence="8">
    <location>
        <begin position="32"/>
        <end position="40"/>
    </location>
</feature>
<feature type="strand" evidence="8">
    <location>
        <begin position="45"/>
        <end position="48"/>
    </location>
</feature>
<feature type="strand" evidence="8">
    <location>
        <begin position="50"/>
        <end position="52"/>
    </location>
</feature>
<feature type="strand" evidence="8">
    <location>
        <begin position="55"/>
        <end position="57"/>
    </location>
</feature>
<feature type="helix" evidence="8">
    <location>
        <begin position="59"/>
        <end position="61"/>
    </location>
</feature>
<feature type="strand" evidence="8">
    <location>
        <begin position="65"/>
        <end position="68"/>
    </location>
</feature>
<feature type="strand" evidence="8">
    <location>
        <begin position="71"/>
        <end position="76"/>
    </location>
</feature>
<feature type="strand" evidence="8">
    <location>
        <begin position="80"/>
        <end position="82"/>
    </location>
</feature>
<feature type="strand" evidence="8">
    <location>
        <begin position="84"/>
        <end position="90"/>
    </location>
</feature>
<feature type="helix" evidence="8">
    <location>
        <begin position="94"/>
        <end position="105"/>
    </location>
</feature>
<reference key="1">
    <citation type="journal article" date="1998" name="J. Biol. Chem.">
        <title>Novel recognition motif on fibroblast growth factor receptor mediates direct association and activation of SNT adapter proteins.</title>
        <authorList>
            <person name="Xu H."/>
            <person name="Lee K.W."/>
            <person name="Goldfarb M.P."/>
        </authorList>
    </citation>
    <scope>NUCLEOTIDE SEQUENCE [MRNA]</scope>
    <scope>MYRISTOYLATION AT GLY-2</scope>
    <scope>PHOSPHORYLATION AT TYROSINE RESIDUES</scope>
    <scope>INTERACTION WITH FGFR1</scope>
    <source>
        <tissue>Placenta</tissue>
    </source>
</reference>
<reference key="2">
    <citation type="submission" date="2004-06" db="EMBL/GenBank/DDBJ databases">
        <title>Cloning of human full open reading frames in Gateway(TM) system entry vector (pDONR201).</title>
        <authorList>
            <person name="Ebert L."/>
            <person name="Schick M."/>
            <person name="Neubert P."/>
            <person name="Schatten R."/>
            <person name="Henze S."/>
            <person name="Korn B."/>
        </authorList>
    </citation>
    <scope>NUCLEOTIDE SEQUENCE [LARGE SCALE MRNA]</scope>
</reference>
<reference key="3">
    <citation type="journal article" date="2003" name="Nature">
        <title>The DNA sequence and analysis of human chromosome 6.</title>
        <authorList>
            <person name="Mungall A.J."/>
            <person name="Palmer S.A."/>
            <person name="Sims S.K."/>
            <person name="Edwards C.A."/>
            <person name="Ashurst J.L."/>
            <person name="Wilming L."/>
            <person name="Jones M.C."/>
            <person name="Horton R."/>
            <person name="Hunt S.E."/>
            <person name="Scott C.E."/>
            <person name="Gilbert J.G.R."/>
            <person name="Clamp M.E."/>
            <person name="Bethel G."/>
            <person name="Milne S."/>
            <person name="Ainscough R."/>
            <person name="Almeida J.P."/>
            <person name="Ambrose K.D."/>
            <person name="Andrews T.D."/>
            <person name="Ashwell R.I.S."/>
            <person name="Babbage A.K."/>
            <person name="Bagguley C.L."/>
            <person name="Bailey J."/>
            <person name="Banerjee R."/>
            <person name="Barker D.J."/>
            <person name="Barlow K.F."/>
            <person name="Bates K."/>
            <person name="Beare D.M."/>
            <person name="Beasley H."/>
            <person name="Beasley O."/>
            <person name="Bird C.P."/>
            <person name="Blakey S.E."/>
            <person name="Bray-Allen S."/>
            <person name="Brook J."/>
            <person name="Brown A.J."/>
            <person name="Brown J.Y."/>
            <person name="Burford D.C."/>
            <person name="Burrill W."/>
            <person name="Burton J."/>
            <person name="Carder C."/>
            <person name="Carter N.P."/>
            <person name="Chapman J.C."/>
            <person name="Clark S.Y."/>
            <person name="Clark G."/>
            <person name="Clee C.M."/>
            <person name="Clegg S."/>
            <person name="Cobley V."/>
            <person name="Collier R.E."/>
            <person name="Collins J.E."/>
            <person name="Colman L.K."/>
            <person name="Corby N.R."/>
            <person name="Coville G.J."/>
            <person name="Culley K.M."/>
            <person name="Dhami P."/>
            <person name="Davies J."/>
            <person name="Dunn M."/>
            <person name="Earthrowl M.E."/>
            <person name="Ellington A.E."/>
            <person name="Evans K.A."/>
            <person name="Faulkner L."/>
            <person name="Francis M.D."/>
            <person name="Frankish A."/>
            <person name="Frankland J."/>
            <person name="French L."/>
            <person name="Garner P."/>
            <person name="Garnett J."/>
            <person name="Ghori M.J."/>
            <person name="Gilby L.M."/>
            <person name="Gillson C.J."/>
            <person name="Glithero R.J."/>
            <person name="Grafham D.V."/>
            <person name="Grant M."/>
            <person name="Gribble S."/>
            <person name="Griffiths C."/>
            <person name="Griffiths M.N.D."/>
            <person name="Hall R."/>
            <person name="Halls K.S."/>
            <person name="Hammond S."/>
            <person name="Harley J.L."/>
            <person name="Hart E.A."/>
            <person name="Heath P.D."/>
            <person name="Heathcott R."/>
            <person name="Holmes S.J."/>
            <person name="Howden P.J."/>
            <person name="Howe K.L."/>
            <person name="Howell G.R."/>
            <person name="Huckle E."/>
            <person name="Humphray S.J."/>
            <person name="Humphries M.D."/>
            <person name="Hunt A.R."/>
            <person name="Johnson C.M."/>
            <person name="Joy A.A."/>
            <person name="Kay M."/>
            <person name="Keenan S.J."/>
            <person name="Kimberley A.M."/>
            <person name="King A."/>
            <person name="Laird G.K."/>
            <person name="Langford C."/>
            <person name="Lawlor S."/>
            <person name="Leongamornlert D.A."/>
            <person name="Leversha M."/>
            <person name="Lloyd C.R."/>
            <person name="Lloyd D.M."/>
            <person name="Loveland J.E."/>
            <person name="Lovell J."/>
            <person name="Martin S."/>
            <person name="Mashreghi-Mohammadi M."/>
            <person name="Maslen G.L."/>
            <person name="Matthews L."/>
            <person name="McCann O.T."/>
            <person name="McLaren S.J."/>
            <person name="McLay K."/>
            <person name="McMurray A."/>
            <person name="Moore M.J.F."/>
            <person name="Mullikin J.C."/>
            <person name="Niblett D."/>
            <person name="Nickerson T."/>
            <person name="Novik K.L."/>
            <person name="Oliver K."/>
            <person name="Overton-Larty E.K."/>
            <person name="Parker A."/>
            <person name="Patel R."/>
            <person name="Pearce A.V."/>
            <person name="Peck A.I."/>
            <person name="Phillimore B.J.C.T."/>
            <person name="Phillips S."/>
            <person name="Plumb R.W."/>
            <person name="Porter K.M."/>
            <person name="Ramsey Y."/>
            <person name="Ranby S.A."/>
            <person name="Rice C.M."/>
            <person name="Ross M.T."/>
            <person name="Searle S.M."/>
            <person name="Sehra H.K."/>
            <person name="Sheridan E."/>
            <person name="Skuce C.D."/>
            <person name="Smith S."/>
            <person name="Smith M."/>
            <person name="Spraggon L."/>
            <person name="Squares S.L."/>
            <person name="Steward C.A."/>
            <person name="Sycamore N."/>
            <person name="Tamlyn-Hall G."/>
            <person name="Tester J."/>
            <person name="Theaker A.J."/>
            <person name="Thomas D.W."/>
            <person name="Thorpe A."/>
            <person name="Tracey A."/>
            <person name="Tromans A."/>
            <person name="Tubby B."/>
            <person name="Wall M."/>
            <person name="Wallis J.M."/>
            <person name="West A.P."/>
            <person name="White S.S."/>
            <person name="Whitehead S.L."/>
            <person name="Whittaker H."/>
            <person name="Wild A."/>
            <person name="Willey D.J."/>
            <person name="Wilmer T.E."/>
            <person name="Wood J.M."/>
            <person name="Wray P.W."/>
            <person name="Wyatt J.C."/>
            <person name="Young L."/>
            <person name="Younger R.M."/>
            <person name="Bentley D.R."/>
            <person name="Coulson A."/>
            <person name="Durbin R.M."/>
            <person name="Hubbard T."/>
            <person name="Sulston J.E."/>
            <person name="Dunham I."/>
            <person name="Rogers J."/>
            <person name="Beck S."/>
        </authorList>
    </citation>
    <scope>NUCLEOTIDE SEQUENCE [LARGE SCALE GENOMIC DNA]</scope>
</reference>
<reference key="4">
    <citation type="journal article" date="2004" name="Genome Res.">
        <title>The status, quality, and expansion of the NIH full-length cDNA project: the Mammalian Gene Collection (MGC).</title>
        <authorList>
            <consortium name="The MGC Project Team"/>
        </authorList>
    </citation>
    <scope>NUCLEOTIDE SEQUENCE [LARGE SCALE MRNA]</scope>
    <source>
        <tissue>Brain</tissue>
    </source>
</reference>
<reference key="5">
    <citation type="journal article" date="2004" name="Biochem. Biophys. Res. Commun.">
        <title>SNT-2 interacts with ERK2 and negatively regulates ERK2 signaling in response to EGF stimulation.</title>
        <authorList>
            <person name="Huang L."/>
            <person name="Gotoh N."/>
            <person name="Zhang S."/>
            <person name="Shibuya M."/>
            <person name="Yamamoto T."/>
            <person name="Tsuchida N."/>
        </authorList>
    </citation>
    <scope>INTERACTION WITH ERK2</scope>
</reference>
<reference key="6">
    <citation type="journal article" date="2004" name="FEBS Lett.">
        <title>FRS2 family docking proteins with overlapping roles in activation of MAP kinase have distinct spatial-temporal patterns of expression of their transcripts.</title>
        <authorList>
            <person name="Gotoh N."/>
            <person name="Laks S."/>
            <person name="Nakashima M."/>
            <person name="Lax I."/>
            <person name="Schlessinger J."/>
        </authorList>
    </citation>
    <scope>FUNCTION</scope>
    <scope>INTERACTION WITH FGFR1; NGFR; GRB2 AND PTPN11</scope>
    <scope>PHOSPHORYLATION AT TYROSINE RESIDUES</scope>
</reference>
<reference key="7">
    <citation type="submission" date="2009-02" db="PDB data bank">
        <title>Solution structure of the complex of the PTB domain of SNT-2 and 19-residue peptide (aa 1571-1589) of HALK.</title>
        <authorList>
            <consortium name="RIKEN structural genomics initiative (RSGI)"/>
        </authorList>
    </citation>
    <scope>STRUCTURE BY NMR OF 6-146</scope>
</reference>
<evidence type="ECO:0000250" key="1"/>
<evidence type="ECO:0000255" key="2"/>
<evidence type="ECO:0000255" key="3">
    <source>
        <dbReference type="PROSITE-ProRule" id="PRU00389"/>
    </source>
</evidence>
<evidence type="ECO:0000256" key="4">
    <source>
        <dbReference type="SAM" id="MobiDB-lite"/>
    </source>
</evidence>
<evidence type="ECO:0000269" key="5">
    <source>
    </source>
</evidence>
<evidence type="ECO:0000269" key="6">
    <source>
    </source>
</evidence>
<evidence type="ECO:0000305" key="7">
    <source>
    </source>
</evidence>
<evidence type="ECO:0007829" key="8">
    <source>
        <dbReference type="PDB" id="2KUP"/>
    </source>
</evidence>
<evidence type="ECO:0007829" key="9">
    <source>
        <dbReference type="PDB" id="2KUQ"/>
    </source>
</evidence>
<protein>
    <recommendedName>
        <fullName>Fibroblast growth factor receptor substrate 3</fullName>
        <shortName>FGFR substrate 3</shortName>
    </recommendedName>
    <alternativeName>
        <fullName>FGFR-signaling adaptor SNT2</fullName>
    </alternativeName>
    <alternativeName>
        <fullName>Suc1-associated neurotrophic factor target 2</fullName>
        <shortName>SNT-2</shortName>
    </alternativeName>
</protein>
<gene>
    <name type="primary">FRS3</name>
</gene>
<sequence>MGSCCSCLNRDSVPDNHPTKFKVTNVDDEGVELGSGVMELTQSELVLHLHRREAVRWPYLCLRRYGYDSNLFSFESGRRCQTGQGIFAFKCSRAEEIFNLLQDLMQCNSINVMEEPVIITRNSHPAELDLPRAPQPPNALGYTVSSFSNGCPGEGPRFSAPRRLSTSSLRHPSLGEESTHALIAPDEQSHTYVNTPASEDDHRRGRHCLQPLPEGQAPFLPQARGPDQRDPQVFLQPGQVKFVLGPTPARRHMVKCQGLCPSLHDPPHHNNNNEAPSECPAQPKCTYENVTGGLWRGAGWRLSPEEPGWNGLAHRRAALLHYENLPPLPPVWESQAQQLGGEAGDDGDSRDGLTPSSNGFPDGEEDETPLQKPTSTRAAIRSHGSFPVPLTRRRGSPRVFNFDFRRPGPEPPRQLNYIQVELKGWGGDRPKGPQNPSSPQAPMPTTHPARSSDSYAVIDLKKTVAMSNLQRALPRDDGTARKTRHNSTDLPL</sequence>